<organism>
    <name type="scientific">Staphylococcus aureus (strain MW2)</name>
    <dbReference type="NCBI Taxonomy" id="196620"/>
    <lineage>
        <taxon>Bacteria</taxon>
        <taxon>Bacillati</taxon>
        <taxon>Bacillota</taxon>
        <taxon>Bacilli</taxon>
        <taxon>Bacillales</taxon>
        <taxon>Staphylococcaceae</taxon>
        <taxon>Staphylococcus</taxon>
    </lineage>
</organism>
<reference key="1">
    <citation type="journal article" date="2002" name="Lancet">
        <title>Genome and virulence determinants of high virulence community-acquired MRSA.</title>
        <authorList>
            <person name="Baba T."/>
            <person name="Takeuchi F."/>
            <person name="Kuroda M."/>
            <person name="Yuzawa H."/>
            <person name="Aoki K."/>
            <person name="Oguchi A."/>
            <person name="Nagai Y."/>
            <person name="Iwama N."/>
            <person name="Asano K."/>
            <person name="Naimi T."/>
            <person name="Kuroda H."/>
            <person name="Cui L."/>
            <person name="Yamamoto K."/>
            <person name="Hiramatsu K."/>
        </authorList>
    </citation>
    <scope>NUCLEOTIDE SEQUENCE [LARGE SCALE GENOMIC DNA]</scope>
    <source>
        <strain>MW2</strain>
    </source>
</reference>
<name>DEOC2_STAAW</name>
<sequence length="220" mass="23336">MHSAKLIDHTLLKPESTRTQIDQIIDEAKAYHFKSVCVNPTHVKYAAERLADSEVLVCTVIGFPLGASTTATKAFETEDAIQNGADEIDMVINIGALKDGRFDDVQQDIEAVVKAAKGHTVKVIIETVLLDHDEIVKASELTKAAGADFVKTSTGFAGGGATAEDVKLMKDTVGADVEVKASGGVRNLEDFNKMVEAGATRIGASAGVQIMQGLEADSDY</sequence>
<proteinExistence type="inferred from homology"/>
<evidence type="ECO:0000255" key="1">
    <source>
        <dbReference type="HAMAP-Rule" id="MF_00114"/>
    </source>
</evidence>
<evidence type="ECO:0000305" key="2"/>
<gene>
    <name evidence="1" type="primary">deoC2</name>
    <name type="ordered locus">MW2061</name>
</gene>
<protein>
    <recommendedName>
        <fullName evidence="1">Deoxyribose-phosphate aldolase 2</fullName>
        <shortName evidence="1">DERA 2</shortName>
        <ecNumber evidence="1">4.1.2.4</ecNumber>
    </recommendedName>
    <alternativeName>
        <fullName evidence="1">2-deoxy-D-ribose 5-phosphate aldolase 2</fullName>
    </alternativeName>
    <alternativeName>
        <fullName evidence="1">Phosphodeoxyriboaldolase 2</fullName>
        <shortName evidence="1">Deoxyriboaldolase 2</shortName>
    </alternativeName>
</protein>
<dbReference type="EC" id="4.1.2.4" evidence="1"/>
<dbReference type="EMBL" id="BA000033">
    <property type="protein sequence ID" value="BAB95926.1"/>
    <property type="molecule type" value="Genomic_DNA"/>
</dbReference>
<dbReference type="SMR" id="Q8NVF5"/>
<dbReference type="KEGG" id="sam:MW2061"/>
<dbReference type="HOGENOM" id="CLU_053595_0_0_9"/>
<dbReference type="UniPathway" id="UPA00002">
    <property type="reaction ID" value="UER00468"/>
</dbReference>
<dbReference type="GO" id="GO:0005737">
    <property type="term" value="C:cytoplasm"/>
    <property type="evidence" value="ECO:0007669"/>
    <property type="project" value="UniProtKB-SubCell"/>
</dbReference>
<dbReference type="GO" id="GO:0004139">
    <property type="term" value="F:deoxyribose-phosphate aldolase activity"/>
    <property type="evidence" value="ECO:0007669"/>
    <property type="project" value="UniProtKB-UniRule"/>
</dbReference>
<dbReference type="GO" id="GO:0006018">
    <property type="term" value="P:2-deoxyribose 1-phosphate catabolic process"/>
    <property type="evidence" value="ECO:0007669"/>
    <property type="project" value="UniProtKB-UniRule"/>
</dbReference>
<dbReference type="GO" id="GO:0016052">
    <property type="term" value="P:carbohydrate catabolic process"/>
    <property type="evidence" value="ECO:0007669"/>
    <property type="project" value="TreeGrafter"/>
</dbReference>
<dbReference type="GO" id="GO:0009264">
    <property type="term" value="P:deoxyribonucleotide catabolic process"/>
    <property type="evidence" value="ECO:0007669"/>
    <property type="project" value="InterPro"/>
</dbReference>
<dbReference type="CDD" id="cd00959">
    <property type="entry name" value="DeoC"/>
    <property type="match status" value="1"/>
</dbReference>
<dbReference type="FunFam" id="3.20.20.70:FF:000044">
    <property type="entry name" value="Deoxyribose-phosphate aldolase"/>
    <property type="match status" value="1"/>
</dbReference>
<dbReference type="Gene3D" id="3.20.20.70">
    <property type="entry name" value="Aldolase class I"/>
    <property type="match status" value="1"/>
</dbReference>
<dbReference type="HAMAP" id="MF_00114">
    <property type="entry name" value="DeoC_type1"/>
    <property type="match status" value="1"/>
</dbReference>
<dbReference type="InterPro" id="IPR013785">
    <property type="entry name" value="Aldolase_TIM"/>
</dbReference>
<dbReference type="InterPro" id="IPR011343">
    <property type="entry name" value="DeoC"/>
</dbReference>
<dbReference type="InterPro" id="IPR002915">
    <property type="entry name" value="DeoC/FbaB/LacD_aldolase"/>
</dbReference>
<dbReference type="InterPro" id="IPR028581">
    <property type="entry name" value="DeoC_typeI"/>
</dbReference>
<dbReference type="NCBIfam" id="TIGR00126">
    <property type="entry name" value="deoC"/>
    <property type="match status" value="1"/>
</dbReference>
<dbReference type="PANTHER" id="PTHR10889">
    <property type="entry name" value="DEOXYRIBOSE-PHOSPHATE ALDOLASE"/>
    <property type="match status" value="1"/>
</dbReference>
<dbReference type="PANTHER" id="PTHR10889:SF1">
    <property type="entry name" value="DEOXYRIBOSE-PHOSPHATE ALDOLASE"/>
    <property type="match status" value="1"/>
</dbReference>
<dbReference type="Pfam" id="PF01791">
    <property type="entry name" value="DeoC"/>
    <property type="match status" value="1"/>
</dbReference>
<dbReference type="PIRSF" id="PIRSF001357">
    <property type="entry name" value="DeoC"/>
    <property type="match status" value="1"/>
</dbReference>
<dbReference type="SMART" id="SM01133">
    <property type="entry name" value="DeoC"/>
    <property type="match status" value="1"/>
</dbReference>
<dbReference type="SUPFAM" id="SSF51569">
    <property type="entry name" value="Aldolase"/>
    <property type="match status" value="1"/>
</dbReference>
<comment type="function">
    <text evidence="1">Catalyzes a reversible aldol reaction between acetaldehyde and D-glyceraldehyde 3-phosphate to generate 2-deoxy-D-ribose 5-phosphate.</text>
</comment>
<comment type="catalytic activity">
    <reaction evidence="1">
        <text>2-deoxy-D-ribose 5-phosphate = D-glyceraldehyde 3-phosphate + acetaldehyde</text>
        <dbReference type="Rhea" id="RHEA:12821"/>
        <dbReference type="ChEBI" id="CHEBI:15343"/>
        <dbReference type="ChEBI" id="CHEBI:59776"/>
        <dbReference type="ChEBI" id="CHEBI:62877"/>
        <dbReference type="EC" id="4.1.2.4"/>
    </reaction>
</comment>
<comment type="pathway">
    <text evidence="1">Carbohydrate degradation; 2-deoxy-D-ribose 1-phosphate degradation; D-glyceraldehyde 3-phosphate and acetaldehyde from 2-deoxy-alpha-D-ribose 1-phosphate: step 2/2.</text>
</comment>
<comment type="subcellular location">
    <subcellularLocation>
        <location evidence="1">Cytoplasm</location>
    </subcellularLocation>
</comment>
<comment type="similarity">
    <text evidence="1 2">Belongs to the DeoC/FbaB aldolase family. DeoC type 1 subfamily.</text>
</comment>
<accession>Q8NVF5</accession>
<feature type="chain" id="PRO_0000057266" description="Deoxyribose-phosphate aldolase 2">
    <location>
        <begin position="1"/>
        <end position="220"/>
    </location>
</feature>
<feature type="active site" description="Proton donor/acceptor" evidence="1">
    <location>
        <position position="89"/>
    </location>
</feature>
<feature type="active site" description="Schiff-base intermediate with acetaldehyde" evidence="1">
    <location>
        <position position="151"/>
    </location>
</feature>
<feature type="active site" description="Proton donor/acceptor" evidence="1">
    <location>
        <position position="180"/>
    </location>
</feature>
<keyword id="KW-0963">Cytoplasm</keyword>
<keyword id="KW-0456">Lyase</keyword>
<keyword id="KW-0704">Schiff base</keyword>